<comment type="function">
    <text evidence="1">Protamines substitute for histones in the chromatin of sperm during the haploid phase of spermatogenesis. They compact sperm DNA into a highly condensed, stable and inactive complex (By similarity).</text>
</comment>
<comment type="subcellular location">
    <subcellularLocation>
        <location evidence="1">Nucleus</location>
    </subcellularLocation>
    <subcellularLocation>
        <location evidence="1">Chromosome</location>
    </subcellularLocation>
</comment>
<comment type="tissue specificity">
    <text>Testis.</text>
</comment>
<comment type="similarity">
    <text evidence="3">Belongs to the protamine P1 family.</text>
</comment>
<organism>
    <name type="scientific">Sminthopsis psammophila</name>
    <name type="common">Sandhill dunnart</name>
    <dbReference type="NCBI Taxonomy" id="90766"/>
    <lineage>
        <taxon>Eukaryota</taxon>
        <taxon>Metazoa</taxon>
        <taxon>Chordata</taxon>
        <taxon>Craniata</taxon>
        <taxon>Vertebrata</taxon>
        <taxon>Euteleostomi</taxon>
        <taxon>Mammalia</taxon>
        <taxon>Metatheria</taxon>
        <taxon>Dasyuromorphia</taxon>
        <taxon>Dasyuridae</taxon>
        <taxon>Sminthopsis</taxon>
    </lineage>
</organism>
<sequence>MARYRRHSRSRSRSRYRRRRRRRSRHHNRRRTYRRSRRHSRRRRGRRRGYSRRRYSRRGRRRY</sequence>
<keyword id="KW-0158">Chromosome</keyword>
<keyword id="KW-0217">Developmental protein</keyword>
<keyword id="KW-0221">Differentiation</keyword>
<keyword id="KW-0226">DNA condensation</keyword>
<keyword id="KW-0238">DNA-binding</keyword>
<keyword id="KW-0544">Nucleosome core</keyword>
<keyword id="KW-0539">Nucleus</keyword>
<keyword id="KW-0744">Spermatogenesis</keyword>
<proteinExistence type="evidence at transcript level"/>
<reference key="1">
    <citation type="journal article" date="1999" name="Mol. Phylogenet. Evol.">
        <title>Systematic relationships within the dasyurid marsupial tribe Sminthopsini -- a multigene approach.</title>
        <authorList>
            <person name="Blacket M.J."/>
            <person name="Krajewski C."/>
            <person name="Labrinidis A."/>
            <person name="Cambron B."/>
            <person name="Cooper S."/>
            <person name="Westerman M."/>
        </authorList>
    </citation>
    <scope>NUCLEOTIDE SEQUENCE [GENOMIC DNA]</scope>
</reference>
<feature type="chain" id="PRO_0000191573" description="Sperm protamine P1">
    <location>
        <begin position="1"/>
        <end position="63"/>
    </location>
</feature>
<feature type="region of interest" description="Disordered" evidence="2">
    <location>
        <begin position="1"/>
        <end position="63"/>
    </location>
</feature>
<name>HSP1_SMIPS</name>
<dbReference type="EMBL" id="AF089883">
    <property type="protein sequence ID" value="AAD55342.1"/>
    <property type="molecule type" value="Genomic_DNA"/>
</dbReference>
<dbReference type="GO" id="GO:0000786">
    <property type="term" value="C:nucleosome"/>
    <property type="evidence" value="ECO:0007669"/>
    <property type="project" value="UniProtKB-KW"/>
</dbReference>
<dbReference type="GO" id="GO:0005634">
    <property type="term" value="C:nucleus"/>
    <property type="evidence" value="ECO:0007669"/>
    <property type="project" value="UniProtKB-SubCell"/>
</dbReference>
<dbReference type="GO" id="GO:0003677">
    <property type="term" value="F:DNA binding"/>
    <property type="evidence" value="ECO:0007669"/>
    <property type="project" value="UniProtKB-KW"/>
</dbReference>
<dbReference type="GO" id="GO:0030261">
    <property type="term" value="P:chromosome condensation"/>
    <property type="evidence" value="ECO:0007669"/>
    <property type="project" value="UniProtKB-KW"/>
</dbReference>
<dbReference type="GO" id="GO:0035092">
    <property type="term" value="P:sperm DNA condensation"/>
    <property type="evidence" value="ECO:0007669"/>
    <property type="project" value="InterPro"/>
</dbReference>
<dbReference type="InterPro" id="IPR000221">
    <property type="entry name" value="Protamine_P1"/>
</dbReference>
<dbReference type="PROSITE" id="PS00048">
    <property type="entry name" value="PROTAMINE_P1"/>
    <property type="match status" value="1"/>
</dbReference>
<accession>Q71UG0</accession>
<evidence type="ECO:0000250" key="1"/>
<evidence type="ECO:0000256" key="2">
    <source>
        <dbReference type="SAM" id="MobiDB-lite"/>
    </source>
</evidence>
<evidence type="ECO:0000305" key="3"/>
<protein>
    <recommendedName>
        <fullName>Sperm protamine P1</fullName>
    </recommendedName>
</protein>
<gene>
    <name type="primary">PRM1</name>
</gene>